<sequence>MAKKDKTSVKKSVKETASKKGAIEKPSKSKKITKEAAKEIAKQSSKTDVSPKKSKKEAKRASSPEPSKKSVKKQKKSKKKEESSSESESESSSSESESSSSESESSSSESESSSSESSSSESEEEVIVKTEEKKESSSESSSSSESEEEEEAVVKIEEKKESSSDSSSESSSSESESESSSSESEEEEEVVEKTEEKKEGSSESSSDSESSSDSSSESGDSDSSSDSESESSSEDEKKRKAEPASEERPAKITKPSQDSNETCTVFVGRLSWNVDDQWLGQEFEEYGTIVGARVIMDGQSGRSKGYGYVDFETPEAAKAAVAANGTKEIDGRMVNLDLSNPRPANPQPYAQQRAGNFGDQLSEPSDTVFVGNLSFNATEDDLSTAFGGCGDIQSIRLPTDPQSGRLKGFGYVTFSDIDSAKKCVEMNGHFIAGRPCRLDFSTPRTGGGSRGGRGGFGGRGGFGGRGGFGGGRGRGRGGARSGNPNRGSVAPFSGNKVTFD</sequence>
<proteinExistence type="evidence at protein level"/>
<gene>
    <name type="primary">gar2</name>
    <name type="ORF">SPAC140.02</name>
</gene>
<evidence type="ECO:0000255" key="1">
    <source>
        <dbReference type="PROSITE-ProRule" id="PRU00176"/>
    </source>
</evidence>
<evidence type="ECO:0000256" key="2">
    <source>
        <dbReference type="SAM" id="MobiDB-lite"/>
    </source>
</evidence>
<evidence type="ECO:0000269" key="3">
    <source>
    </source>
</evidence>
<evidence type="ECO:0000305" key="4"/>
<reference key="1">
    <citation type="journal article" date="1995" name="Nucleic Acids Res.">
        <title>gar2 is a nucleolar protein from Schizosaccharomyces pombe required for 18S rRNA and 40S ribosomal subunit accumulation.</title>
        <authorList>
            <person name="Gulli M.-P."/>
            <person name="Girard J.-P."/>
            <person name="Zabetakis D."/>
            <person name="Lapeyre B."/>
            <person name="Melese T."/>
            <person name="Caizergues-Ferrer M."/>
        </authorList>
    </citation>
    <scope>NUCLEOTIDE SEQUENCE [GENOMIC DNA]</scope>
    <source>
        <strain>972 / ATCC 24843</strain>
    </source>
</reference>
<reference key="2">
    <citation type="journal article" date="2002" name="Nature">
        <title>The genome sequence of Schizosaccharomyces pombe.</title>
        <authorList>
            <person name="Wood V."/>
            <person name="Gwilliam R."/>
            <person name="Rajandream M.A."/>
            <person name="Lyne M.H."/>
            <person name="Lyne R."/>
            <person name="Stewart A."/>
            <person name="Sgouros J.G."/>
            <person name="Peat N."/>
            <person name="Hayles J."/>
            <person name="Baker S.G."/>
            <person name="Basham D."/>
            <person name="Bowman S."/>
            <person name="Brooks K."/>
            <person name="Brown D."/>
            <person name="Brown S."/>
            <person name="Chillingworth T."/>
            <person name="Churcher C.M."/>
            <person name="Collins M."/>
            <person name="Connor R."/>
            <person name="Cronin A."/>
            <person name="Davis P."/>
            <person name="Feltwell T."/>
            <person name="Fraser A."/>
            <person name="Gentles S."/>
            <person name="Goble A."/>
            <person name="Hamlin N."/>
            <person name="Harris D.E."/>
            <person name="Hidalgo J."/>
            <person name="Hodgson G."/>
            <person name="Holroyd S."/>
            <person name="Hornsby T."/>
            <person name="Howarth S."/>
            <person name="Huckle E.J."/>
            <person name="Hunt S."/>
            <person name="Jagels K."/>
            <person name="James K.D."/>
            <person name="Jones L."/>
            <person name="Jones M."/>
            <person name="Leather S."/>
            <person name="McDonald S."/>
            <person name="McLean J."/>
            <person name="Mooney P."/>
            <person name="Moule S."/>
            <person name="Mungall K.L."/>
            <person name="Murphy L.D."/>
            <person name="Niblett D."/>
            <person name="Odell C."/>
            <person name="Oliver K."/>
            <person name="O'Neil S."/>
            <person name="Pearson D."/>
            <person name="Quail M.A."/>
            <person name="Rabbinowitsch E."/>
            <person name="Rutherford K.M."/>
            <person name="Rutter S."/>
            <person name="Saunders D."/>
            <person name="Seeger K."/>
            <person name="Sharp S."/>
            <person name="Skelton J."/>
            <person name="Simmonds M.N."/>
            <person name="Squares R."/>
            <person name="Squares S."/>
            <person name="Stevens K."/>
            <person name="Taylor K."/>
            <person name="Taylor R.G."/>
            <person name="Tivey A."/>
            <person name="Walsh S.V."/>
            <person name="Warren T."/>
            <person name="Whitehead S."/>
            <person name="Woodward J.R."/>
            <person name="Volckaert G."/>
            <person name="Aert R."/>
            <person name="Robben J."/>
            <person name="Grymonprez B."/>
            <person name="Weltjens I."/>
            <person name="Vanstreels E."/>
            <person name="Rieger M."/>
            <person name="Schaefer M."/>
            <person name="Mueller-Auer S."/>
            <person name="Gabel C."/>
            <person name="Fuchs M."/>
            <person name="Duesterhoeft A."/>
            <person name="Fritzc C."/>
            <person name="Holzer E."/>
            <person name="Moestl D."/>
            <person name="Hilbert H."/>
            <person name="Borzym K."/>
            <person name="Langer I."/>
            <person name="Beck A."/>
            <person name="Lehrach H."/>
            <person name="Reinhardt R."/>
            <person name="Pohl T.M."/>
            <person name="Eger P."/>
            <person name="Zimmermann W."/>
            <person name="Wedler H."/>
            <person name="Wambutt R."/>
            <person name="Purnelle B."/>
            <person name="Goffeau A."/>
            <person name="Cadieu E."/>
            <person name="Dreano S."/>
            <person name="Gloux S."/>
            <person name="Lelaure V."/>
            <person name="Mottier S."/>
            <person name="Galibert F."/>
            <person name="Aves S.J."/>
            <person name="Xiang Z."/>
            <person name="Hunt C."/>
            <person name="Moore K."/>
            <person name="Hurst S.M."/>
            <person name="Lucas M."/>
            <person name="Rochet M."/>
            <person name="Gaillardin C."/>
            <person name="Tallada V.A."/>
            <person name="Garzon A."/>
            <person name="Thode G."/>
            <person name="Daga R.R."/>
            <person name="Cruzado L."/>
            <person name="Jimenez J."/>
            <person name="Sanchez M."/>
            <person name="del Rey F."/>
            <person name="Benito J."/>
            <person name="Dominguez A."/>
            <person name="Revuelta J.L."/>
            <person name="Moreno S."/>
            <person name="Armstrong J."/>
            <person name="Forsburg S.L."/>
            <person name="Cerutti L."/>
            <person name="Lowe T."/>
            <person name="McCombie W.R."/>
            <person name="Paulsen I."/>
            <person name="Potashkin J."/>
            <person name="Shpakovski G.V."/>
            <person name="Ussery D."/>
            <person name="Barrell B.G."/>
            <person name="Nurse P."/>
        </authorList>
    </citation>
    <scope>NUCLEOTIDE SEQUENCE [LARGE SCALE GENOMIC DNA]</scope>
    <source>
        <strain>972 / ATCC 24843</strain>
    </source>
</reference>
<reference key="3">
    <citation type="journal article" date="2008" name="J. Proteome Res.">
        <title>Phosphoproteome analysis of fission yeast.</title>
        <authorList>
            <person name="Wilson-Grady J.T."/>
            <person name="Villen J."/>
            <person name="Gygi S.P."/>
        </authorList>
    </citation>
    <scope>PHOSPHORYLATION [LARGE SCALE ANALYSIS] AT SER-143; SER-144 AND SER-146</scope>
    <scope>IDENTIFICATION BY MASS SPECTROMETRY</scope>
</reference>
<comment type="function">
    <text>Helps the assembly of pre-ribosomal particles containing 18S rRNA.</text>
</comment>
<comment type="subcellular location">
    <subcellularLocation>
        <location>Nucleus</location>
        <location>Nucleolus</location>
    </subcellularLocation>
</comment>
<comment type="similarity">
    <text evidence="4">Belongs to the RRM GAR family.</text>
</comment>
<dbReference type="EMBL" id="Z48166">
    <property type="protein sequence ID" value="CAA88179.1"/>
    <property type="molecule type" value="Genomic_DNA"/>
</dbReference>
<dbReference type="EMBL" id="CU329670">
    <property type="protein sequence ID" value="CAB86413.1"/>
    <property type="molecule type" value="Genomic_DNA"/>
</dbReference>
<dbReference type="PIR" id="S55785">
    <property type="entry name" value="S55785"/>
</dbReference>
<dbReference type="RefSeq" id="NP_593531.1">
    <property type="nucleotide sequence ID" value="NM_001018965.2"/>
</dbReference>
<dbReference type="SMR" id="P41891"/>
<dbReference type="BioGRID" id="279314">
    <property type="interactions" value="67"/>
</dbReference>
<dbReference type="STRING" id="284812.P41891"/>
<dbReference type="iPTMnet" id="P41891"/>
<dbReference type="PaxDb" id="4896-SPAC140.02.1"/>
<dbReference type="EnsemblFungi" id="SPAC140.02.1">
    <property type="protein sequence ID" value="SPAC140.02.1:pep"/>
    <property type="gene ID" value="SPAC140.02"/>
</dbReference>
<dbReference type="GeneID" id="2542869"/>
<dbReference type="KEGG" id="spo:2542869"/>
<dbReference type="PomBase" id="SPAC140.02">
    <property type="gene designation" value="gar2"/>
</dbReference>
<dbReference type="VEuPathDB" id="FungiDB:SPAC140.02"/>
<dbReference type="eggNOG" id="KOG4210">
    <property type="taxonomic scope" value="Eukaryota"/>
</dbReference>
<dbReference type="HOGENOM" id="CLU_026791_1_1_1"/>
<dbReference type="InParanoid" id="P41891"/>
<dbReference type="OMA" id="EIRIVMN"/>
<dbReference type="PRO" id="PR:P41891"/>
<dbReference type="Proteomes" id="UP000002485">
    <property type="component" value="Chromosome I"/>
</dbReference>
<dbReference type="GO" id="GO:0001651">
    <property type="term" value="C:dense fibrillar component"/>
    <property type="evidence" value="ECO:0000314"/>
    <property type="project" value="PomBase"/>
</dbReference>
<dbReference type="GO" id="GO:0005730">
    <property type="term" value="C:nucleolus"/>
    <property type="evidence" value="ECO:0000314"/>
    <property type="project" value="PomBase"/>
</dbReference>
<dbReference type="GO" id="GO:0005634">
    <property type="term" value="C:nucleus"/>
    <property type="evidence" value="ECO:0000318"/>
    <property type="project" value="GO_Central"/>
</dbReference>
<dbReference type="GO" id="GO:0140713">
    <property type="term" value="F:histone chaperone activity"/>
    <property type="evidence" value="ECO:0000304"/>
    <property type="project" value="PomBase"/>
</dbReference>
<dbReference type="GO" id="GO:0003723">
    <property type="term" value="F:RNA binding"/>
    <property type="evidence" value="ECO:0000304"/>
    <property type="project" value="PomBase"/>
</dbReference>
<dbReference type="GO" id="GO:0006338">
    <property type="term" value="P:chromatin remodeling"/>
    <property type="evidence" value="ECO:0000304"/>
    <property type="project" value="PomBase"/>
</dbReference>
<dbReference type="GO" id="GO:0016072">
    <property type="term" value="P:rRNA metabolic process"/>
    <property type="evidence" value="ECO:0000315"/>
    <property type="project" value="PomBase"/>
</dbReference>
<dbReference type="GO" id="GO:0006364">
    <property type="term" value="P:rRNA processing"/>
    <property type="evidence" value="ECO:0000315"/>
    <property type="project" value="PomBase"/>
</dbReference>
<dbReference type="CDD" id="cd12448">
    <property type="entry name" value="RRM2_gar2"/>
    <property type="match status" value="1"/>
</dbReference>
<dbReference type="Gene3D" id="3.30.70.330">
    <property type="match status" value="2"/>
</dbReference>
<dbReference type="InterPro" id="IPR034276">
    <property type="entry name" value="Gar2_RRM2"/>
</dbReference>
<dbReference type="InterPro" id="IPR012677">
    <property type="entry name" value="Nucleotide-bd_a/b_plait_sf"/>
</dbReference>
<dbReference type="InterPro" id="IPR035979">
    <property type="entry name" value="RBD_domain_sf"/>
</dbReference>
<dbReference type="InterPro" id="IPR050886">
    <property type="entry name" value="RNA-binding_reg"/>
</dbReference>
<dbReference type="InterPro" id="IPR000504">
    <property type="entry name" value="RRM_dom"/>
</dbReference>
<dbReference type="PANTHER" id="PTHR48024">
    <property type="entry name" value="GEO13361P1-RELATED"/>
    <property type="match status" value="1"/>
</dbReference>
<dbReference type="PANTHER" id="PTHR48024:SF56">
    <property type="entry name" value="HETEROGENEOUS NUCLEAR RIBONUCLEOPROTEIN A0"/>
    <property type="match status" value="1"/>
</dbReference>
<dbReference type="Pfam" id="PF00076">
    <property type="entry name" value="RRM_1"/>
    <property type="match status" value="2"/>
</dbReference>
<dbReference type="SMART" id="SM00360">
    <property type="entry name" value="RRM"/>
    <property type="match status" value="2"/>
</dbReference>
<dbReference type="SUPFAM" id="SSF54928">
    <property type="entry name" value="RNA-binding domain, RBD"/>
    <property type="match status" value="2"/>
</dbReference>
<dbReference type="PROSITE" id="PS50102">
    <property type="entry name" value="RRM"/>
    <property type="match status" value="2"/>
</dbReference>
<feature type="chain" id="PRO_0000081595" description="Protein gar2">
    <location>
        <begin position="1"/>
        <end position="500"/>
    </location>
</feature>
<feature type="domain" description="RRM 1" evidence="1">
    <location>
        <begin position="263"/>
        <end position="341"/>
    </location>
</feature>
<feature type="domain" description="RRM 2" evidence="1">
    <location>
        <begin position="366"/>
        <end position="443"/>
    </location>
</feature>
<feature type="region of interest" description="Disordered" evidence="2">
    <location>
        <begin position="1"/>
        <end position="262"/>
    </location>
</feature>
<feature type="region of interest" description="Disordered" evidence="2">
    <location>
        <begin position="441"/>
        <end position="500"/>
    </location>
</feature>
<feature type="compositionally biased region" description="Basic and acidic residues" evidence="2">
    <location>
        <begin position="1"/>
        <end position="41"/>
    </location>
</feature>
<feature type="compositionally biased region" description="Basic and acidic residues" evidence="2">
    <location>
        <begin position="59"/>
        <end position="68"/>
    </location>
</feature>
<feature type="compositionally biased region" description="Basic residues" evidence="2">
    <location>
        <begin position="69"/>
        <end position="78"/>
    </location>
</feature>
<feature type="compositionally biased region" description="Low complexity" evidence="2">
    <location>
        <begin position="90"/>
        <end position="120"/>
    </location>
</feature>
<feature type="compositionally biased region" description="Basic and acidic residues" evidence="2">
    <location>
        <begin position="126"/>
        <end position="137"/>
    </location>
</feature>
<feature type="compositionally biased region" description="Basic and acidic residues" evidence="2">
    <location>
        <begin position="152"/>
        <end position="163"/>
    </location>
</feature>
<feature type="compositionally biased region" description="Low complexity" evidence="2">
    <location>
        <begin position="164"/>
        <end position="182"/>
    </location>
</feature>
<feature type="compositionally biased region" description="Basic and acidic residues" evidence="2">
    <location>
        <begin position="191"/>
        <end position="201"/>
    </location>
</feature>
<feature type="compositionally biased region" description="Low complexity" evidence="2">
    <location>
        <begin position="202"/>
        <end position="218"/>
    </location>
</feature>
<feature type="compositionally biased region" description="Acidic residues" evidence="2">
    <location>
        <begin position="219"/>
        <end position="233"/>
    </location>
</feature>
<feature type="compositionally biased region" description="Basic and acidic residues" evidence="2">
    <location>
        <begin position="234"/>
        <end position="250"/>
    </location>
</feature>
<feature type="compositionally biased region" description="Gly residues" evidence="2">
    <location>
        <begin position="445"/>
        <end position="480"/>
    </location>
</feature>
<feature type="modified residue" description="Phosphoserine" evidence="3">
    <location>
        <position position="143"/>
    </location>
</feature>
<feature type="modified residue" description="Phosphoserine" evidence="3">
    <location>
        <position position="144"/>
    </location>
</feature>
<feature type="modified residue" description="Phosphoserine" evidence="3">
    <location>
        <position position="146"/>
    </location>
</feature>
<feature type="sequence conflict" description="In Ref. 1; CAA88179." evidence="4" ref="1">
    <original>S</original>
    <variation>P</variation>
    <location>
        <position position="339"/>
    </location>
</feature>
<organism>
    <name type="scientific">Schizosaccharomyces pombe (strain 972 / ATCC 24843)</name>
    <name type="common">Fission yeast</name>
    <dbReference type="NCBI Taxonomy" id="284812"/>
    <lineage>
        <taxon>Eukaryota</taxon>
        <taxon>Fungi</taxon>
        <taxon>Dikarya</taxon>
        <taxon>Ascomycota</taxon>
        <taxon>Taphrinomycotina</taxon>
        <taxon>Schizosaccharomycetes</taxon>
        <taxon>Schizosaccharomycetales</taxon>
        <taxon>Schizosaccharomycetaceae</taxon>
        <taxon>Schizosaccharomyces</taxon>
    </lineage>
</organism>
<name>GAR2_SCHPO</name>
<accession>P41891</accession>
<accession>O13707</accession>
<protein>
    <recommendedName>
        <fullName>Protein gar2</fullName>
    </recommendedName>
</protein>
<keyword id="KW-0539">Nucleus</keyword>
<keyword id="KW-0597">Phosphoprotein</keyword>
<keyword id="KW-1185">Reference proteome</keyword>
<keyword id="KW-0677">Repeat</keyword>
<keyword id="KW-0690">Ribosome biogenesis</keyword>
<keyword id="KW-0694">RNA-binding</keyword>
<keyword id="KW-0698">rRNA processing</keyword>